<dbReference type="EC" id="4.2.1.33" evidence="1"/>
<dbReference type="EMBL" id="AP008934">
    <property type="protein sequence ID" value="BAE17964.1"/>
    <property type="molecule type" value="Genomic_DNA"/>
</dbReference>
<dbReference type="RefSeq" id="WP_002482761.1">
    <property type="nucleotide sequence ID" value="NZ_MTGA01000028.1"/>
</dbReference>
<dbReference type="SMR" id="Q49Z14"/>
<dbReference type="GeneID" id="66866979"/>
<dbReference type="KEGG" id="ssp:SSP0819"/>
<dbReference type="eggNOG" id="COG0065">
    <property type="taxonomic scope" value="Bacteria"/>
</dbReference>
<dbReference type="HOGENOM" id="CLU_006714_3_4_9"/>
<dbReference type="OrthoDB" id="9802769at2"/>
<dbReference type="UniPathway" id="UPA00048">
    <property type="reaction ID" value="UER00071"/>
</dbReference>
<dbReference type="Proteomes" id="UP000006371">
    <property type="component" value="Chromosome"/>
</dbReference>
<dbReference type="GO" id="GO:0003861">
    <property type="term" value="F:3-isopropylmalate dehydratase activity"/>
    <property type="evidence" value="ECO:0007669"/>
    <property type="project" value="UniProtKB-UniRule"/>
</dbReference>
<dbReference type="GO" id="GO:0051539">
    <property type="term" value="F:4 iron, 4 sulfur cluster binding"/>
    <property type="evidence" value="ECO:0007669"/>
    <property type="project" value="UniProtKB-KW"/>
</dbReference>
<dbReference type="GO" id="GO:0046872">
    <property type="term" value="F:metal ion binding"/>
    <property type="evidence" value="ECO:0007669"/>
    <property type="project" value="UniProtKB-KW"/>
</dbReference>
<dbReference type="GO" id="GO:0009098">
    <property type="term" value="P:L-leucine biosynthetic process"/>
    <property type="evidence" value="ECO:0007669"/>
    <property type="project" value="UniProtKB-UniRule"/>
</dbReference>
<dbReference type="CDD" id="cd01583">
    <property type="entry name" value="IPMI"/>
    <property type="match status" value="1"/>
</dbReference>
<dbReference type="Gene3D" id="3.30.499.10">
    <property type="entry name" value="Aconitase, domain 3"/>
    <property type="match status" value="2"/>
</dbReference>
<dbReference type="HAMAP" id="MF_01026">
    <property type="entry name" value="LeuC_type1"/>
    <property type="match status" value="1"/>
</dbReference>
<dbReference type="InterPro" id="IPR004430">
    <property type="entry name" value="3-IsopropMal_deHydase_lsu"/>
</dbReference>
<dbReference type="InterPro" id="IPR015931">
    <property type="entry name" value="Acnase/IPM_dHydase_lsu_aba_1/3"/>
</dbReference>
<dbReference type="InterPro" id="IPR001030">
    <property type="entry name" value="Acoase/IPM_deHydtase_lsu_aba"/>
</dbReference>
<dbReference type="InterPro" id="IPR018136">
    <property type="entry name" value="Aconitase_4Fe-4S_BS"/>
</dbReference>
<dbReference type="InterPro" id="IPR036008">
    <property type="entry name" value="Aconitase_4Fe-4S_dom"/>
</dbReference>
<dbReference type="InterPro" id="IPR050067">
    <property type="entry name" value="IPM_dehydratase_rel_enz"/>
</dbReference>
<dbReference type="InterPro" id="IPR033941">
    <property type="entry name" value="IPMI_cat"/>
</dbReference>
<dbReference type="NCBIfam" id="TIGR00170">
    <property type="entry name" value="leuC"/>
    <property type="match status" value="1"/>
</dbReference>
<dbReference type="NCBIfam" id="NF004016">
    <property type="entry name" value="PRK05478.1"/>
    <property type="match status" value="1"/>
</dbReference>
<dbReference type="NCBIfam" id="NF009116">
    <property type="entry name" value="PRK12466.1"/>
    <property type="match status" value="1"/>
</dbReference>
<dbReference type="PANTHER" id="PTHR43822:SF9">
    <property type="entry name" value="3-ISOPROPYLMALATE DEHYDRATASE"/>
    <property type="match status" value="1"/>
</dbReference>
<dbReference type="PANTHER" id="PTHR43822">
    <property type="entry name" value="HOMOACONITASE, MITOCHONDRIAL-RELATED"/>
    <property type="match status" value="1"/>
</dbReference>
<dbReference type="Pfam" id="PF00330">
    <property type="entry name" value="Aconitase"/>
    <property type="match status" value="1"/>
</dbReference>
<dbReference type="PRINTS" id="PR00415">
    <property type="entry name" value="ACONITASE"/>
</dbReference>
<dbReference type="SUPFAM" id="SSF53732">
    <property type="entry name" value="Aconitase iron-sulfur domain"/>
    <property type="match status" value="1"/>
</dbReference>
<dbReference type="PROSITE" id="PS00450">
    <property type="entry name" value="ACONITASE_1"/>
    <property type="match status" value="1"/>
</dbReference>
<dbReference type="PROSITE" id="PS01244">
    <property type="entry name" value="ACONITASE_2"/>
    <property type="match status" value="1"/>
</dbReference>
<gene>
    <name evidence="1" type="primary">leuC</name>
    <name type="ordered locus">SSP0819</name>
</gene>
<keyword id="KW-0004">4Fe-4S</keyword>
<keyword id="KW-0028">Amino-acid biosynthesis</keyword>
<keyword id="KW-0100">Branched-chain amino acid biosynthesis</keyword>
<keyword id="KW-0408">Iron</keyword>
<keyword id="KW-0411">Iron-sulfur</keyword>
<keyword id="KW-0432">Leucine biosynthesis</keyword>
<keyword id="KW-0456">Lyase</keyword>
<keyword id="KW-0479">Metal-binding</keyword>
<keyword id="KW-1185">Reference proteome</keyword>
<sequence length="456" mass="50263">MGKTLFDKVWNKHVLTGKEGDPQLLYIDLHLIHEVTSPQAFEGLRLQNRQLRRPDLTYATLDHNVPTVDIFNIKDEIANKQITTLQKNAKAFGVHIFDMGSDEQGIVHMVGPETGLTQPGKTIVCGDSHTATHGAFGAIAFGIGTSEVEHVFATQSLWQTKPKNLKIEVNGKLPTGVYAKDIILHLINQHGVDFGTGYALEFSGETIRSLSMEARMTICNMAIEAGAKYGMMAPDETTFEYVKGRPYATNYKYDIDAWRELYTDEDAEFDRVITLDVTDLEPQVTWGTNPEMGVSFNTPFPEIQNVNDERAYNYMGLQPGQKAEDIDLGYVFLGSCTNARLSDLVEASHVVKGNKVHPNITAIVVPGSRTVKIEAEKLGLDKIFKDAGFDWREPGCSMCLGMNPDQVPNGVHCASTSNRNFEGRQGKGARTHLVSPAMAAAAAINGKFVDVRKVVV</sequence>
<reference key="1">
    <citation type="journal article" date="2005" name="Proc. Natl. Acad. Sci. U.S.A.">
        <title>Whole genome sequence of Staphylococcus saprophyticus reveals the pathogenesis of uncomplicated urinary tract infection.</title>
        <authorList>
            <person name="Kuroda M."/>
            <person name="Yamashita A."/>
            <person name="Hirakawa H."/>
            <person name="Kumano M."/>
            <person name="Morikawa K."/>
            <person name="Higashide M."/>
            <person name="Maruyama A."/>
            <person name="Inose Y."/>
            <person name="Matoba K."/>
            <person name="Toh H."/>
            <person name="Kuhara S."/>
            <person name="Hattori M."/>
            <person name="Ohta T."/>
        </authorList>
    </citation>
    <scope>NUCLEOTIDE SEQUENCE [LARGE SCALE GENOMIC DNA]</scope>
    <source>
        <strain>ATCC 15305 / DSM 20229 / NCIMB 8711 / NCTC 7292 / S-41</strain>
    </source>
</reference>
<name>LEUC_STAS1</name>
<proteinExistence type="inferred from homology"/>
<evidence type="ECO:0000255" key="1">
    <source>
        <dbReference type="HAMAP-Rule" id="MF_01026"/>
    </source>
</evidence>
<comment type="function">
    <text evidence="1">Catalyzes the isomerization between 2-isopropylmalate and 3-isopropylmalate, via the formation of 2-isopropylmaleate.</text>
</comment>
<comment type="catalytic activity">
    <reaction evidence="1">
        <text>(2R,3S)-3-isopropylmalate = (2S)-2-isopropylmalate</text>
        <dbReference type="Rhea" id="RHEA:32287"/>
        <dbReference type="ChEBI" id="CHEBI:1178"/>
        <dbReference type="ChEBI" id="CHEBI:35121"/>
        <dbReference type="EC" id="4.2.1.33"/>
    </reaction>
</comment>
<comment type="cofactor">
    <cofactor evidence="1">
        <name>[4Fe-4S] cluster</name>
        <dbReference type="ChEBI" id="CHEBI:49883"/>
    </cofactor>
    <text evidence="1">Binds 1 [4Fe-4S] cluster per subunit.</text>
</comment>
<comment type="pathway">
    <text evidence="1">Amino-acid biosynthesis; L-leucine biosynthesis; L-leucine from 3-methyl-2-oxobutanoate: step 2/4.</text>
</comment>
<comment type="subunit">
    <text evidence="1">Heterodimer of LeuC and LeuD.</text>
</comment>
<comment type="similarity">
    <text evidence="1">Belongs to the aconitase/IPM isomerase family. LeuC type 1 subfamily.</text>
</comment>
<feature type="chain" id="PRO_0000076820" description="3-isopropylmalate dehydratase large subunit">
    <location>
        <begin position="1"/>
        <end position="456"/>
    </location>
</feature>
<feature type="binding site" evidence="1">
    <location>
        <position position="336"/>
    </location>
    <ligand>
        <name>[4Fe-4S] cluster</name>
        <dbReference type="ChEBI" id="CHEBI:49883"/>
    </ligand>
</feature>
<feature type="binding site" evidence="1">
    <location>
        <position position="396"/>
    </location>
    <ligand>
        <name>[4Fe-4S] cluster</name>
        <dbReference type="ChEBI" id="CHEBI:49883"/>
    </ligand>
</feature>
<feature type="binding site" evidence="1">
    <location>
        <position position="399"/>
    </location>
    <ligand>
        <name>[4Fe-4S] cluster</name>
        <dbReference type="ChEBI" id="CHEBI:49883"/>
    </ligand>
</feature>
<protein>
    <recommendedName>
        <fullName evidence="1">3-isopropylmalate dehydratase large subunit</fullName>
        <ecNumber evidence="1">4.2.1.33</ecNumber>
    </recommendedName>
    <alternativeName>
        <fullName evidence="1">Alpha-IPM isomerase</fullName>
        <shortName evidence="1">IPMI</shortName>
    </alternativeName>
    <alternativeName>
        <fullName evidence="1">Isopropylmalate isomerase</fullName>
    </alternativeName>
</protein>
<accession>Q49Z14</accession>
<organism>
    <name type="scientific">Staphylococcus saprophyticus subsp. saprophyticus (strain ATCC 15305 / DSM 20229 / NCIMB 8711 / NCTC 7292 / S-41)</name>
    <dbReference type="NCBI Taxonomy" id="342451"/>
    <lineage>
        <taxon>Bacteria</taxon>
        <taxon>Bacillati</taxon>
        <taxon>Bacillota</taxon>
        <taxon>Bacilli</taxon>
        <taxon>Bacillales</taxon>
        <taxon>Staphylococcaceae</taxon>
        <taxon>Staphylococcus</taxon>
    </lineage>
</organism>